<proteinExistence type="evidence at protein level"/>
<gene>
    <name type="primary">Irak1</name>
    <name type="synonym">Il1rak</name>
</gene>
<organism>
    <name type="scientific">Mus musculus</name>
    <name type="common">Mouse</name>
    <dbReference type="NCBI Taxonomy" id="10090"/>
    <lineage>
        <taxon>Eukaryota</taxon>
        <taxon>Metazoa</taxon>
        <taxon>Chordata</taxon>
        <taxon>Craniata</taxon>
        <taxon>Vertebrata</taxon>
        <taxon>Euteleostomi</taxon>
        <taxon>Mammalia</taxon>
        <taxon>Eutheria</taxon>
        <taxon>Euarchontoglires</taxon>
        <taxon>Glires</taxon>
        <taxon>Rodentia</taxon>
        <taxon>Myomorpha</taxon>
        <taxon>Muroidea</taxon>
        <taxon>Muridae</taxon>
        <taxon>Murinae</taxon>
        <taxon>Mus</taxon>
        <taxon>Mus</taxon>
    </lineage>
</organism>
<comment type="function">
    <text evidence="1 13">Serine/threonine-protein kinase that plays a critical role in initiating innate immune response against foreign pathogens. Involved in Toll-like receptor (TLR) and IL-1R signaling pathways. Is rapidly recruited by MYD88 to the receptor-signaling complex upon TLR activation. Association with MYD88 leads to IRAK1 phosphorylation by IRAK4 and subsequent autophosphorylation and kinase activation. Phosphorylates E3 ubiquitin ligases Pellino proteins (PELI1, PELI2 and PELI3) to promote pellino-mediated polyubiquitination of IRAK1. Then, the ubiquitin-binding domain of IKBKG/NEMO binds to polyubiquitinated IRAK1 bringing together the IRAK1-MAP3K7/TAK1-TRAF6 complex and the NEMO-IKKA-IKKB complex. In turn, MAP3K7/TAK1 activates IKKs (CHUK/IKKA and IKBKB/IKKB) leading to NF-kappa-B nuclear translocation and activation. Alternatively, phosphorylates TIRAP to promote its ubiquitination and subsequent degradation. Phosphorylates the interferon regulatory factor 7 (IRF7) to induce its activation and translocation to the nucleus, resulting in transcriptional activation of type I IFN genes, which drive the cell in an antiviral state. When sumoylated, translocates to the nucleus and phosphorylates STAT3 (By similarity).</text>
</comment>
<comment type="catalytic activity">
    <reaction>
        <text>L-seryl-[protein] + ATP = O-phospho-L-seryl-[protein] + ADP + H(+)</text>
        <dbReference type="Rhea" id="RHEA:17989"/>
        <dbReference type="Rhea" id="RHEA-COMP:9863"/>
        <dbReference type="Rhea" id="RHEA-COMP:11604"/>
        <dbReference type="ChEBI" id="CHEBI:15378"/>
        <dbReference type="ChEBI" id="CHEBI:29999"/>
        <dbReference type="ChEBI" id="CHEBI:30616"/>
        <dbReference type="ChEBI" id="CHEBI:83421"/>
        <dbReference type="ChEBI" id="CHEBI:456216"/>
        <dbReference type="EC" id="2.7.11.1"/>
    </reaction>
</comment>
<comment type="catalytic activity">
    <reaction>
        <text>L-threonyl-[protein] + ATP = O-phospho-L-threonyl-[protein] + ADP + H(+)</text>
        <dbReference type="Rhea" id="RHEA:46608"/>
        <dbReference type="Rhea" id="RHEA-COMP:11060"/>
        <dbReference type="Rhea" id="RHEA-COMP:11605"/>
        <dbReference type="ChEBI" id="CHEBI:15378"/>
        <dbReference type="ChEBI" id="CHEBI:30013"/>
        <dbReference type="ChEBI" id="CHEBI:30616"/>
        <dbReference type="ChEBI" id="CHEBI:61977"/>
        <dbReference type="ChEBI" id="CHEBI:456216"/>
        <dbReference type="EC" id="2.7.11.1"/>
    </reaction>
</comment>
<comment type="cofactor">
    <cofactor>
        <name>Mg(2+)</name>
        <dbReference type="ChEBI" id="CHEBI:18420"/>
    </cofactor>
</comment>
<comment type="subunit">
    <text evidence="2 6 8 10 11 12">Homodimer (By similarity). Forms a complex with TRAF6, PELI1, IRAK4 and MYD88 (PubMed:16951688). Direct binding of SMAD6 to PELI1 prevents complex formation and hence negatively regulates IL1R-TLR signaling and eventually NF-kappa-B-mediated gene expression (By similarity). The TRAF6-PELI1-IRAK4-MYD88 complex recruits MAP3K7/TAK1, TAB1 and TAB2 to mediate NF-kappa-B activation (By similarity). Interaction with MYD88 recruits IRAK1 to the stimulated receptor complex (By similarity). Interacts with TOLLIP; this interaction occurs in the cytosol prior to receptor activation (By similarity). Interacts with IL1RL1 (By similarity). Interacts (when polyubiquitinated) with IKBKG/NEMO (By similarity). Interacts with RSAD2/viperin (PubMed:21435586). Interacts with IRAK1BP1 (PubMed:11096118). Interacts with PELI2 (PubMed:12370331). Interacts with ZC3H12A; this interaction increases the interaction between ZC3H12A and IKBKB/IKKB (PubMed:22037600). Interacts with IRAK4 (By similarity). Interacts with PELI3 (By similarity). Interacts with PELI1 and TRAF6 (By similarity). Interacts with INAVA; the interaction takes place upon PRR stimulation (By similarity). Interacts (via C-terminus) with NFATC4 (via N-terminus) (By similarity).</text>
</comment>
<comment type="interaction">
    <interactant intactId="EBI-448533">
        <id>Q62406</id>
    </interactant>
    <interactant intactId="EBI-525108">
        <id>P22366</id>
        <label>Myd88</label>
    </interactant>
    <organismsDiffer>false</organismsDiffer>
    <experiments>3</experiments>
</comment>
<comment type="interaction">
    <interactant intactId="EBI-448533">
        <id>Q62406</id>
    </interactant>
    <interactant intactId="EBI-448554">
        <id>Q8BST6</id>
        <label>Peli2</label>
    </interactant>
    <organismsDiffer>false</organismsDiffer>
    <experiments>2</experiments>
</comment>
<comment type="interaction">
    <interactant intactId="EBI-448533">
        <id>Q62406</id>
    </interactant>
    <interactant intactId="EBI-524817">
        <id>Q793I8</id>
        <label>Tifa</label>
    </interactant>
    <organismsDiffer>false</organismsDiffer>
    <experiments>2</experiments>
</comment>
<comment type="interaction">
    <interactant intactId="EBI-448533">
        <id>Q62406</id>
    </interactant>
    <interactant intactId="EBI-74272">
        <id>Q9QZ06</id>
        <label>Tollip</label>
    </interactant>
    <organismsDiffer>false</organismsDiffer>
    <experiments>2</experiments>
</comment>
<comment type="interaction">
    <interactant intactId="EBI-448533">
        <id>Q62406</id>
    </interactant>
    <interactant intactId="EBI-520016">
        <id>P39429</id>
        <label>Traf2</label>
    </interactant>
    <organismsDiffer>false</organismsDiffer>
    <experiments>2</experiments>
</comment>
<comment type="interaction">
    <interactant intactId="EBI-488313">
        <id>Q62406-1</id>
    </interactant>
    <interactant intactId="EBI-646572">
        <id>Q3THG9</id>
        <label>Aarsd1</label>
    </interactant>
    <organismsDiffer>false</organismsDiffer>
    <experiments>4</experiments>
</comment>
<comment type="interaction">
    <interactant intactId="EBI-488313">
        <id>Q62406-1</id>
    </interactant>
    <interactant intactId="EBI-645953">
        <id>P37889-1</id>
        <label>Fbln2</label>
    </interactant>
    <organismsDiffer>false</organismsDiffer>
    <experiments>10</experiments>
</comment>
<comment type="interaction">
    <interactant intactId="EBI-488313">
        <id>Q62406-1</id>
    </interactant>
    <interactant intactId="EBI-448028">
        <id>P70196</id>
        <label>Traf6</label>
    </interactant>
    <organismsDiffer>false</organismsDiffer>
    <experiments>4</experiments>
</comment>
<comment type="subcellular location">
    <subcellularLocation>
        <location evidence="1">Cytoplasm</location>
    </subcellularLocation>
    <subcellularLocation>
        <location evidence="1">Nucleus</location>
    </subcellularLocation>
    <subcellularLocation>
        <location evidence="11">Lipid droplet</location>
    </subcellularLocation>
    <text evidence="1">Translocates to the nucleus when sumoylated (By similarity). RSAD2/viperin recruits it to the lipid droplet.</text>
</comment>
<comment type="alternative products">
    <event type="alternative splicing"/>
    <isoform>
        <id>Q62406-1</id>
        <name>1</name>
        <sequence type="displayed"/>
    </isoform>
    <isoform>
        <id>Q62406-2</id>
        <name>2</name>
        <sequence type="described" ref="VSP_011852"/>
    </isoform>
</comment>
<comment type="tissue specificity">
    <text evidence="13">Highly expressed in liver, followed by kidney and skeletal muscle.</text>
</comment>
<comment type="developmental stage">
    <text evidence="13">Expressed from 11 dpc to 18 dpc.</text>
</comment>
<comment type="domain">
    <text evidence="1">The ProST region is composed of many proline and serine residues (more than 20 of each) and some threonines. This region is the site of IRAK-1 hyperphosphorylation (By similarity).</text>
</comment>
<comment type="PTM">
    <text evidence="1">Following recruitment on the activated receptor complex, phosphorylated on Thr-209, probably by IRAK4, resulting in a conformational change of the kinase domain, allowing further phosphorylations to take place. Thr-387 phosphorylation in the activation loop is required to achieve full enzymatic activity (By similarity).</text>
</comment>
<comment type="PTM">
    <text evidence="1">Polyubiquitinated by TRAF6 after cell stimulation with IL-1-beta by PELI1, PELI2 and PELI3. Polyubiquitination occurs with polyubiquitin chains linked through 'Lys-63'. Ubiquitination promotes interaction with NEMO/IKBKG. Also sumoylated; leading to nuclear translocation (By similarity).</text>
</comment>
<comment type="disruption phenotype">
    <text evidence="9">Mice show a loss in TLR7- and TLR9-mediated IFN-alpha production in plasmacytoid dendritic cells demonstrating an important role in innate immune response.</text>
</comment>
<comment type="similarity">
    <text evidence="15">Belongs to the protein kinase superfamily. TKL Ser/Thr protein kinase family. Pelle subfamily.</text>
</comment>
<comment type="sequence caution" evidence="15">
    <conflict type="erroneous initiation">
        <sequence resource="EMBL-CDS" id="AAD13224"/>
    </conflict>
</comment>
<name>IRAK1_MOUSE</name>
<feature type="chain" id="PRO_0000086031" description="Interleukin-1 receptor-associated kinase 1">
    <location>
        <begin position="1"/>
        <end position="710"/>
    </location>
</feature>
<feature type="domain" description="Death">
    <location>
        <begin position="27"/>
        <end position="106"/>
    </location>
</feature>
<feature type="domain" description="Protein kinase" evidence="3">
    <location>
        <begin position="212"/>
        <end position="521"/>
    </location>
</feature>
<feature type="region of interest" description="Disordered" evidence="5">
    <location>
        <begin position="107"/>
        <end position="133"/>
    </location>
</feature>
<feature type="region of interest" description="ProST region" evidence="1">
    <location>
        <begin position="110"/>
        <end position="211"/>
    </location>
</feature>
<feature type="region of interest" description="Disordered" evidence="5">
    <location>
        <begin position="169"/>
        <end position="190"/>
    </location>
</feature>
<feature type="region of interest" description="Disordered" evidence="5">
    <location>
        <begin position="527"/>
        <end position="655"/>
    </location>
</feature>
<feature type="region of interest" description="Disordered" evidence="5">
    <location>
        <begin position="689"/>
        <end position="710"/>
    </location>
</feature>
<feature type="compositionally biased region" description="Low complexity" evidence="5">
    <location>
        <begin position="111"/>
        <end position="123"/>
    </location>
</feature>
<feature type="compositionally biased region" description="Low complexity" evidence="5">
    <location>
        <begin position="174"/>
        <end position="188"/>
    </location>
</feature>
<feature type="compositionally biased region" description="Polar residues" evidence="5">
    <location>
        <begin position="537"/>
        <end position="553"/>
    </location>
</feature>
<feature type="compositionally biased region" description="Low complexity" evidence="5">
    <location>
        <begin position="567"/>
        <end position="576"/>
    </location>
</feature>
<feature type="compositionally biased region" description="Polar residues" evidence="5">
    <location>
        <begin position="616"/>
        <end position="639"/>
    </location>
</feature>
<feature type="compositionally biased region" description="Low complexity" evidence="5">
    <location>
        <begin position="640"/>
        <end position="654"/>
    </location>
</feature>
<feature type="active site" description="Proton acceptor" evidence="3 4">
    <location>
        <position position="340"/>
    </location>
</feature>
<feature type="binding site" evidence="3">
    <location>
        <begin position="218"/>
        <end position="226"/>
    </location>
    <ligand>
        <name>ATP</name>
        <dbReference type="ChEBI" id="CHEBI:30616"/>
    </ligand>
</feature>
<feature type="binding site" evidence="3">
    <location>
        <position position="239"/>
    </location>
    <ligand>
        <name>ATP</name>
        <dbReference type="ChEBI" id="CHEBI:30616"/>
    </ligand>
</feature>
<feature type="binding site" evidence="3">
    <location>
        <begin position="342"/>
        <end position="345"/>
    </location>
    <ligand>
        <name>ATP</name>
        <dbReference type="ChEBI" id="CHEBI:30616"/>
    </ligand>
</feature>
<feature type="binding site" evidence="3">
    <location>
        <position position="358"/>
    </location>
    <ligand>
        <name>ATP</name>
        <dbReference type="ChEBI" id="CHEBI:30616"/>
    </ligand>
</feature>
<feature type="modified residue" description="Phosphothreonine; by PKC/PRKCI" evidence="2">
    <location>
        <position position="66"/>
    </location>
</feature>
<feature type="modified residue" description="Phosphoserine" evidence="2">
    <location>
        <position position="131"/>
    </location>
</feature>
<feature type="modified residue" description="Phosphothreonine; by IRAK4" evidence="2">
    <location>
        <position position="209"/>
    </location>
</feature>
<feature type="modified residue" description="Phosphoserine" evidence="2">
    <location>
        <position position="375"/>
    </location>
</feature>
<feature type="modified residue" description="Phosphothreonine" evidence="2">
    <location>
        <position position="387"/>
    </location>
</feature>
<feature type="modified residue" description="Phosphoserine" evidence="2">
    <location>
        <position position="553"/>
    </location>
</feature>
<feature type="cross-link" description="Glycyl lysine isopeptide (Lys-Gly) (interchain with G-Cter in ubiquitin)" evidence="2">
    <location>
        <position position="134"/>
    </location>
</feature>
<feature type="cross-link" description="Glycyl lysine isopeptide (Lys-Gly) (interchain with G-Cter in ubiquitin)" evidence="2">
    <location>
        <position position="180"/>
    </location>
</feature>
<feature type="splice variant" id="VSP_011852" description="In isoform 2." evidence="14">
    <original>GLDLEPEKSQGPEESDEFQS</original>
    <variation>DFVDIDAIGIEAFMSELFINHI</variation>
    <location>
        <begin position="691"/>
        <end position="710"/>
    </location>
</feature>
<feature type="mutagenesis site" description="Abolishes dimerization." evidence="7">
    <original>T</original>
    <variation>A</variation>
    <location>
        <position position="66"/>
    </location>
</feature>
<feature type="mutagenesis site" description="Abolishes dimerization." evidence="7">
    <original>T</original>
    <variation>E</variation>
    <location>
        <position position="66"/>
    </location>
</feature>
<feature type="sequence conflict" description="In Ref. 2; AAO63013." evidence="15" ref="2">
    <original>P</original>
    <variation>L</variation>
    <location>
        <position position="702"/>
    </location>
</feature>
<keyword id="KW-0025">Alternative splicing</keyword>
<keyword id="KW-0067">ATP-binding</keyword>
<keyword id="KW-0963">Cytoplasm</keyword>
<keyword id="KW-0391">Immunity</keyword>
<keyword id="KW-0399">Innate immunity</keyword>
<keyword id="KW-1017">Isopeptide bond</keyword>
<keyword id="KW-0418">Kinase</keyword>
<keyword id="KW-0551">Lipid droplet</keyword>
<keyword id="KW-0460">Magnesium</keyword>
<keyword id="KW-0547">Nucleotide-binding</keyword>
<keyword id="KW-0539">Nucleus</keyword>
<keyword id="KW-0597">Phosphoprotein</keyword>
<keyword id="KW-1185">Reference proteome</keyword>
<keyword id="KW-0723">Serine/threonine-protein kinase</keyword>
<keyword id="KW-0808">Transferase</keyword>
<keyword id="KW-0832">Ubl conjugation</keyword>
<dbReference type="EC" id="2.7.11.1"/>
<dbReference type="EMBL" id="AF103876">
    <property type="protein sequence ID" value="AAD13224.1"/>
    <property type="status" value="ALT_INIT"/>
    <property type="molecule type" value="mRNA"/>
</dbReference>
<dbReference type="EMBL" id="AY184363">
    <property type="protein sequence ID" value="AAO63013.1"/>
    <property type="molecule type" value="mRNA"/>
</dbReference>
<dbReference type="EMBL" id="AY184364">
    <property type="protein sequence ID" value="AAO63014.1"/>
    <property type="molecule type" value="mRNA"/>
</dbReference>
<dbReference type="EMBL" id="AL672002">
    <property type="status" value="NOT_ANNOTATED_CDS"/>
    <property type="molecule type" value="Genomic_DNA"/>
</dbReference>
<dbReference type="EMBL" id="U56773">
    <property type="protein sequence ID" value="AAC52694.2"/>
    <property type="molecule type" value="mRNA"/>
</dbReference>
<dbReference type="CCDS" id="CCDS30219.2">
    <molecule id="Q62406-1"/>
</dbReference>
<dbReference type="CCDS" id="CCDS53103.1">
    <molecule id="Q62406-2"/>
</dbReference>
<dbReference type="RefSeq" id="NP_001171445.1">
    <molecule id="Q62406-1"/>
    <property type="nucleotide sequence ID" value="NM_001177974.1"/>
</dbReference>
<dbReference type="RefSeq" id="NP_001171447.1">
    <molecule id="Q62406-2"/>
    <property type="nucleotide sequence ID" value="NM_001177976.1"/>
</dbReference>
<dbReference type="RefSeq" id="NP_032389.2">
    <molecule id="Q62406-1"/>
    <property type="nucleotide sequence ID" value="NM_008363.2"/>
</dbReference>
<dbReference type="SMR" id="Q62406"/>
<dbReference type="BioGRID" id="200627">
    <property type="interactions" value="27"/>
</dbReference>
<dbReference type="DIP" id="DIP-31491N"/>
<dbReference type="ELM" id="Q62406"/>
<dbReference type="FunCoup" id="Q62406">
    <property type="interactions" value="1085"/>
</dbReference>
<dbReference type="IntAct" id="Q62406">
    <property type="interactions" value="29"/>
</dbReference>
<dbReference type="MINT" id="Q62406"/>
<dbReference type="STRING" id="10090.ENSMUSP00000033769"/>
<dbReference type="iPTMnet" id="Q62406"/>
<dbReference type="PhosphoSitePlus" id="Q62406"/>
<dbReference type="PaxDb" id="10090-ENSMUSP00000033769"/>
<dbReference type="ProteomicsDB" id="267149">
    <molecule id="Q62406-1"/>
</dbReference>
<dbReference type="ProteomicsDB" id="267150">
    <molecule id="Q62406-2"/>
</dbReference>
<dbReference type="Pumba" id="Q62406"/>
<dbReference type="Antibodypedia" id="3845">
    <property type="antibodies" value="1013 antibodies from 47 providers"/>
</dbReference>
<dbReference type="DNASU" id="16179"/>
<dbReference type="Ensembl" id="ENSMUST00000068286.12">
    <molecule id="Q62406-1"/>
    <property type="protein sequence ID" value="ENSMUSP00000064448.6"/>
    <property type="gene ID" value="ENSMUSG00000031392.19"/>
</dbReference>
<dbReference type="Ensembl" id="ENSMUST00000114352.8">
    <molecule id="Q62406-1"/>
    <property type="protein sequence ID" value="ENSMUSP00000109992.2"/>
    <property type="gene ID" value="ENSMUSG00000031392.19"/>
</dbReference>
<dbReference type="Ensembl" id="ENSMUST00000114360.10">
    <molecule id="Q62406-2"/>
    <property type="protein sequence ID" value="ENSMUSP00000110000.4"/>
    <property type="gene ID" value="ENSMUSG00000031392.19"/>
</dbReference>
<dbReference type="GeneID" id="16179"/>
<dbReference type="KEGG" id="mmu:16179"/>
<dbReference type="UCSC" id="uc009tnn.2">
    <molecule id="Q62406-1"/>
    <property type="organism name" value="mouse"/>
</dbReference>
<dbReference type="UCSC" id="uc012hkn.1">
    <molecule id="Q62406-2"/>
    <property type="organism name" value="mouse"/>
</dbReference>
<dbReference type="AGR" id="MGI:107420"/>
<dbReference type="CTD" id="3654"/>
<dbReference type="MGI" id="MGI:107420">
    <property type="gene designation" value="Irak1"/>
</dbReference>
<dbReference type="VEuPathDB" id="HostDB:ENSMUSG00000031392"/>
<dbReference type="eggNOG" id="KOG1187">
    <property type="taxonomic scope" value="Eukaryota"/>
</dbReference>
<dbReference type="GeneTree" id="ENSGT00940000160502"/>
<dbReference type="InParanoid" id="Q62406"/>
<dbReference type="OMA" id="MTQVYES"/>
<dbReference type="OrthoDB" id="4062651at2759"/>
<dbReference type="BRENDA" id="2.7.10.2">
    <property type="organism ID" value="3474"/>
</dbReference>
<dbReference type="Reactome" id="R-MMU-1257604">
    <property type="pathway name" value="PIP3 activates AKT signaling"/>
</dbReference>
<dbReference type="Reactome" id="R-MMU-209543">
    <property type="pathway name" value="p75NTR recruits signalling complexes"/>
</dbReference>
<dbReference type="Reactome" id="R-MMU-209560">
    <property type="pathway name" value="NF-kB is activated and signals survival"/>
</dbReference>
<dbReference type="Reactome" id="R-MMU-445989">
    <property type="pathway name" value="TAK1-dependent IKK and NF-kappa-B activation"/>
</dbReference>
<dbReference type="Reactome" id="R-MMU-450302">
    <property type="pathway name" value="activated TAK1 mediates p38 MAPK activation"/>
</dbReference>
<dbReference type="Reactome" id="R-MMU-450321">
    <property type="pathway name" value="JNK (c-Jun kinases) phosphorylation and activation mediated by activated human TAK1"/>
</dbReference>
<dbReference type="Reactome" id="R-MMU-6811558">
    <property type="pathway name" value="PI5P, PP2A and IER3 Regulate PI3K/AKT Signaling"/>
</dbReference>
<dbReference type="Reactome" id="R-MMU-9020702">
    <property type="pathway name" value="Interleukin-1 signaling"/>
</dbReference>
<dbReference type="Reactome" id="R-MMU-937039">
    <property type="pathway name" value="IRAK1 recruits IKK complex"/>
</dbReference>
<dbReference type="Reactome" id="R-MMU-975144">
    <property type="pathway name" value="IRAK1 recruits IKK complex upon TLR7/8 or 9 stimulation"/>
</dbReference>
<dbReference type="BioGRID-ORCS" id="16179">
    <property type="hits" value="1 hit in 80 CRISPR screens"/>
</dbReference>
<dbReference type="ChiTaRS" id="Irak1">
    <property type="organism name" value="mouse"/>
</dbReference>
<dbReference type="PRO" id="PR:Q62406"/>
<dbReference type="Proteomes" id="UP000000589">
    <property type="component" value="Chromosome X"/>
</dbReference>
<dbReference type="RNAct" id="Q62406">
    <property type="molecule type" value="protein"/>
</dbReference>
<dbReference type="Bgee" id="ENSMUSG00000031392">
    <property type="expression patterns" value="Expressed in lacrimal gland and 259 other cell types or tissues"/>
</dbReference>
<dbReference type="ExpressionAtlas" id="Q62406">
    <property type="expression patterns" value="baseline and differential"/>
</dbReference>
<dbReference type="GO" id="GO:0005829">
    <property type="term" value="C:cytosol"/>
    <property type="evidence" value="ECO:0000304"/>
    <property type="project" value="Reactome"/>
</dbReference>
<dbReference type="GO" id="GO:0005811">
    <property type="term" value="C:lipid droplet"/>
    <property type="evidence" value="ECO:0000314"/>
    <property type="project" value="UniProtKB"/>
</dbReference>
<dbReference type="GO" id="GO:0016020">
    <property type="term" value="C:membrane"/>
    <property type="evidence" value="ECO:0000314"/>
    <property type="project" value="UniProtKB"/>
</dbReference>
<dbReference type="GO" id="GO:0005634">
    <property type="term" value="C:nucleus"/>
    <property type="evidence" value="ECO:0007669"/>
    <property type="project" value="UniProtKB-SubCell"/>
</dbReference>
<dbReference type="GO" id="GO:0032991">
    <property type="term" value="C:protein-containing complex"/>
    <property type="evidence" value="ECO:0000314"/>
    <property type="project" value="UniProtKB"/>
</dbReference>
<dbReference type="GO" id="GO:0005524">
    <property type="term" value="F:ATP binding"/>
    <property type="evidence" value="ECO:0007669"/>
    <property type="project" value="UniProtKB-KW"/>
</dbReference>
<dbReference type="GO" id="GO:0005149">
    <property type="term" value="F:interleukin-1 receptor binding"/>
    <property type="evidence" value="ECO:0000353"/>
    <property type="project" value="MGI"/>
</dbReference>
<dbReference type="GO" id="GO:0016301">
    <property type="term" value="F:kinase activity"/>
    <property type="evidence" value="ECO:0000266"/>
    <property type="project" value="MGI"/>
</dbReference>
<dbReference type="GO" id="GO:0004672">
    <property type="term" value="F:protein kinase activity"/>
    <property type="evidence" value="ECO:0000314"/>
    <property type="project" value="MGI"/>
</dbReference>
<dbReference type="GO" id="GO:0106310">
    <property type="term" value="F:protein serine kinase activity"/>
    <property type="evidence" value="ECO:0007669"/>
    <property type="project" value="RHEA"/>
</dbReference>
<dbReference type="GO" id="GO:0004674">
    <property type="term" value="F:protein serine/threonine kinase activity"/>
    <property type="evidence" value="ECO:0007669"/>
    <property type="project" value="UniProtKB-KW"/>
</dbReference>
<dbReference type="GO" id="GO:0019221">
    <property type="term" value="P:cytokine-mediated signaling pathway"/>
    <property type="evidence" value="ECO:0000314"/>
    <property type="project" value="MGI"/>
</dbReference>
<dbReference type="GO" id="GO:0045087">
    <property type="term" value="P:innate immune response"/>
    <property type="evidence" value="ECO:0000270"/>
    <property type="project" value="UniProtKB"/>
</dbReference>
<dbReference type="GO" id="GO:0070498">
    <property type="term" value="P:interleukin-1-mediated signaling pathway"/>
    <property type="evidence" value="ECO:0000314"/>
    <property type="project" value="UniProtKB"/>
</dbReference>
<dbReference type="GO" id="GO:0031663">
    <property type="term" value="P:lipopolysaccharide-mediated signaling pathway"/>
    <property type="evidence" value="ECO:0000314"/>
    <property type="project" value="MGI"/>
</dbReference>
<dbReference type="GO" id="GO:0090370">
    <property type="term" value="P:negative regulation of cholesterol efflux"/>
    <property type="evidence" value="ECO:0000315"/>
    <property type="project" value="UniProtKB"/>
</dbReference>
<dbReference type="GO" id="GO:0045892">
    <property type="term" value="P:negative regulation of DNA-templated transcription"/>
    <property type="evidence" value="ECO:0000315"/>
    <property type="project" value="UniProtKB"/>
</dbReference>
<dbReference type="GO" id="GO:0043123">
    <property type="term" value="P:positive regulation of canonical NF-kappaB signal transduction"/>
    <property type="evidence" value="ECO:0000266"/>
    <property type="project" value="MGI"/>
</dbReference>
<dbReference type="GO" id="GO:0046330">
    <property type="term" value="P:positive regulation of JNK cascade"/>
    <property type="evidence" value="ECO:0000315"/>
    <property type="project" value="BHF-UCL"/>
</dbReference>
<dbReference type="GO" id="GO:0043410">
    <property type="term" value="P:positive regulation of MAPK cascade"/>
    <property type="evidence" value="ECO:0000315"/>
    <property type="project" value="BHF-UCL"/>
</dbReference>
<dbReference type="GO" id="GO:0032496">
    <property type="term" value="P:response to lipopolysaccharide"/>
    <property type="evidence" value="ECO:0000314"/>
    <property type="project" value="MGI"/>
</dbReference>
<dbReference type="GO" id="GO:0032494">
    <property type="term" value="P:response to peptidoglycan"/>
    <property type="evidence" value="ECO:0000314"/>
    <property type="project" value="MGI"/>
</dbReference>
<dbReference type="GO" id="GO:0034134">
    <property type="term" value="P:toll-like receptor 2 signaling pathway"/>
    <property type="evidence" value="ECO:0000314"/>
    <property type="project" value="MGI"/>
</dbReference>
<dbReference type="GO" id="GO:0034142">
    <property type="term" value="P:toll-like receptor 4 signaling pathway"/>
    <property type="evidence" value="ECO:0000314"/>
    <property type="project" value="MGI"/>
</dbReference>
<dbReference type="CDD" id="cd08794">
    <property type="entry name" value="Death_IRAK1"/>
    <property type="match status" value="1"/>
</dbReference>
<dbReference type="FunFam" id="1.10.533.10:FF:000027">
    <property type="entry name" value="Interleukin-1 receptor-associated kinase 1 (Predicted)"/>
    <property type="match status" value="1"/>
</dbReference>
<dbReference type="FunFam" id="3.30.200.20:FF:000300">
    <property type="entry name" value="Interleukin-1 receptor-associated kinase 1 (Predicted)"/>
    <property type="match status" value="1"/>
</dbReference>
<dbReference type="FunFam" id="1.10.510.10:FF:000424">
    <property type="entry name" value="Putative interleukin-1 receptor-associated kinase 1"/>
    <property type="match status" value="1"/>
</dbReference>
<dbReference type="Gene3D" id="1.10.533.10">
    <property type="entry name" value="Death Domain, Fas"/>
    <property type="match status" value="1"/>
</dbReference>
<dbReference type="Gene3D" id="3.30.200.20">
    <property type="entry name" value="Phosphorylase Kinase, domain 1"/>
    <property type="match status" value="1"/>
</dbReference>
<dbReference type="Gene3D" id="1.10.510.10">
    <property type="entry name" value="Transferase(Phosphotransferase) domain 1"/>
    <property type="match status" value="1"/>
</dbReference>
<dbReference type="InterPro" id="IPR011029">
    <property type="entry name" value="DEATH-like_dom_sf"/>
</dbReference>
<dbReference type="InterPro" id="IPR000488">
    <property type="entry name" value="Death_dom"/>
</dbReference>
<dbReference type="InterPro" id="IPR035533">
    <property type="entry name" value="Death_IRAK1"/>
</dbReference>
<dbReference type="InterPro" id="IPR011009">
    <property type="entry name" value="Kinase-like_dom_sf"/>
</dbReference>
<dbReference type="InterPro" id="IPR000719">
    <property type="entry name" value="Prot_kinase_dom"/>
</dbReference>
<dbReference type="InterPro" id="IPR017441">
    <property type="entry name" value="Protein_kinase_ATP_BS"/>
</dbReference>
<dbReference type="InterPro" id="IPR008271">
    <property type="entry name" value="Ser/Thr_kinase_AS"/>
</dbReference>
<dbReference type="PANTHER" id="PTHR27001:SF939">
    <property type="entry name" value="INTERLEUKIN 1 RECEPTOR ASSOCIATED KINASE 1"/>
    <property type="match status" value="1"/>
</dbReference>
<dbReference type="PANTHER" id="PTHR27001">
    <property type="entry name" value="OS01G0253100 PROTEIN"/>
    <property type="match status" value="1"/>
</dbReference>
<dbReference type="Pfam" id="PF00531">
    <property type="entry name" value="Death"/>
    <property type="match status" value="1"/>
</dbReference>
<dbReference type="Pfam" id="PF00069">
    <property type="entry name" value="Pkinase"/>
    <property type="match status" value="1"/>
</dbReference>
<dbReference type="SMART" id="SM00220">
    <property type="entry name" value="S_TKc"/>
    <property type="match status" value="1"/>
</dbReference>
<dbReference type="SUPFAM" id="SSF47986">
    <property type="entry name" value="DEATH domain"/>
    <property type="match status" value="1"/>
</dbReference>
<dbReference type="SUPFAM" id="SSF56112">
    <property type="entry name" value="Protein kinase-like (PK-like)"/>
    <property type="match status" value="1"/>
</dbReference>
<dbReference type="PROSITE" id="PS00107">
    <property type="entry name" value="PROTEIN_KINASE_ATP"/>
    <property type="match status" value="1"/>
</dbReference>
<dbReference type="PROSITE" id="PS50011">
    <property type="entry name" value="PROTEIN_KINASE_DOM"/>
    <property type="match status" value="1"/>
</dbReference>
<dbReference type="PROSITE" id="PS00108">
    <property type="entry name" value="PROTEIN_KINASE_ST"/>
    <property type="match status" value="1"/>
</dbReference>
<protein>
    <recommendedName>
        <fullName>Interleukin-1 receptor-associated kinase 1</fullName>
        <shortName>IRAK</shortName>
        <shortName>IRAK-1</shortName>
        <ecNumber>2.7.11.1</ecNumber>
    </recommendedName>
    <alternativeName>
        <fullName>Pelle-like protein kinase</fullName>
        <shortName>mPLK</shortName>
    </alternativeName>
</protein>
<evidence type="ECO:0000250" key="1"/>
<evidence type="ECO:0000250" key="2">
    <source>
        <dbReference type="UniProtKB" id="P51617"/>
    </source>
</evidence>
<evidence type="ECO:0000255" key="3">
    <source>
        <dbReference type="PROSITE-ProRule" id="PRU00159"/>
    </source>
</evidence>
<evidence type="ECO:0000255" key="4">
    <source>
        <dbReference type="PROSITE-ProRule" id="PRU10027"/>
    </source>
</evidence>
<evidence type="ECO:0000256" key="5">
    <source>
        <dbReference type="SAM" id="MobiDB-lite"/>
    </source>
</evidence>
<evidence type="ECO:0000269" key="6">
    <source>
    </source>
</evidence>
<evidence type="ECO:0000269" key="7">
    <source>
    </source>
</evidence>
<evidence type="ECO:0000269" key="8">
    <source>
    </source>
</evidence>
<evidence type="ECO:0000269" key="9">
    <source>
    </source>
</evidence>
<evidence type="ECO:0000269" key="10">
    <source>
    </source>
</evidence>
<evidence type="ECO:0000269" key="11">
    <source>
    </source>
</evidence>
<evidence type="ECO:0000269" key="12">
    <source>
    </source>
</evidence>
<evidence type="ECO:0000269" key="13">
    <source>
    </source>
</evidence>
<evidence type="ECO:0000303" key="14">
    <source>
    </source>
</evidence>
<evidence type="ECO:0000305" key="15"/>
<reference key="1">
    <citation type="submission" date="1998-11" db="EMBL/GenBank/DDBJ databases">
        <title>Cloning of mouse IRAK.</title>
        <authorList>
            <person name="Kopp E.B."/>
            <person name="Ghosh S."/>
        </authorList>
    </citation>
    <scope>NUCLEOTIDE SEQUENCE [MRNA] (ISOFORM 1)</scope>
</reference>
<reference key="2">
    <citation type="journal article" date="2000" name="Mamm. Genome">
        <title>Comparative sequence analysis of the MECP2-locus in human and mouse reveals new transcribed regions.</title>
        <authorList>
            <person name="Reichwald K."/>
            <person name="Thiesen J."/>
            <person name="Wiehe T."/>
            <person name="Weitzel J."/>
            <person name="Poustka W.A."/>
            <person name="Rosenthal A."/>
            <person name="Platzer M."/>
            <person name="Stratling W.H."/>
            <person name="Kioschis P."/>
        </authorList>
    </citation>
    <scope>NUCLEOTIDE SEQUENCE [MRNA] (ISOFORMS 1 AND 2)</scope>
</reference>
<reference key="3">
    <citation type="journal article" date="2009" name="PLoS Biol.">
        <title>Lineage-specific biology revealed by a finished genome assembly of the mouse.</title>
        <authorList>
            <person name="Church D.M."/>
            <person name="Goodstadt L."/>
            <person name="Hillier L.W."/>
            <person name="Zody M.C."/>
            <person name="Goldstein S."/>
            <person name="She X."/>
            <person name="Bult C.J."/>
            <person name="Agarwala R."/>
            <person name="Cherry J.L."/>
            <person name="DiCuccio M."/>
            <person name="Hlavina W."/>
            <person name="Kapustin Y."/>
            <person name="Meric P."/>
            <person name="Maglott D."/>
            <person name="Birtle Z."/>
            <person name="Marques A.C."/>
            <person name="Graves T."/>
            <person name="Zhou S."/>
            <person name="Teague B."/>
            <person name="Potamousis K."/>
            <person name="Churas C."/>
            <person name="Place M."/>
            <person name="Herschleb J."/>
            <person name="Runnheim R."/>
            <person name="Forrest D."/>
            <person name="Amos-Landgraf J."/>
            <person name="Schwartz D.C."/>
            <person name="Cheng Z."/>
            <person name="Lindblad-Toh K."/>
            <person name="Eichler E.E."/>
            <person name="Ponting C.P."/>
        </authorList>
    </citation>
    <scope>NUCLEOTIDE SEQUENCE [LARGE SCALE GENOMIC DNA]</scope>
    <source>
        <strain>C57BL/6J</strain>
    </source>
</reference>
<reference key="4">
    <citation type="journal article" date="1996" name="J. Biol. Chem.">
        <title>Developmental and tissue-specific expression of mouse pelle-like protein kinase.</title>
        <authorList>
            <person name="Trofimova M."/>
            <person name="Sprenkle A.B."/>
            <person name="Green M."/>
            <person name="Sturgill T.W."/>
            <person name="Goebl M.G."/>
            <person name="Harrington M.A."/>
        </authorList>
    </citation>
    <scope>NUCLEOTIDE SEQUENCE [MRNA] OF 34-710 (ISOFORM 1)</scope>
    <scope>FUNCTION</scope>
    <scope>DEVELOPMENTAL STAGE</scope>
    <scope>TISSUE SPECIFICITY</scope>
    <scope>AUTOPHOSPHORYLATION</scope>
    <source>
        <tissue>Embryo</tissue>
    </source>
</reference>
<reference key="5">
    <citation type="journal article" date="2001" name="J. Biol. Chem.">
        <title>SIMPL is a tumor necrosis factor-specific regulator of nuclear factor-kappaB activity.</title>
        <authorList>
            <person name="Vig E."/>
            <person name="Green M."/>
            <person name="Liu Y."/>
            <person name="Yu K.-Y."/>
            <person name="Kwon H.-J."/>
            <person name="Tian J."/>
            <person name="Goebl M.G."/>
            <person name="Harrington M.A."/>
        </authorList>
    </citation>
    <scope>INTERACTION WITH IRAK1BP1</scope>
</reference>
<reference key="6">
    <citation type="journal article" date="2002" name="J. Biol. Chem.">
        <title>Identification of threonine 66 as a functionally critical residue of the interleukin-1 receptor-associated kinase.</title>
        <authorList>
            <person name="Ross K."/>
            <person name="Yang L."/>
            <person name="Dower S."/>
            <person name="Volpe F."/>
            <person name="Guesdon F."/>
        </authorList>
    </citation>
    <scope>DIMERIZATION</scope>
    <scope>MUTAGENESIS OF THR-66</scope>
</reference>
<reference key="7">
    <citation type="journal article" date="2002" name="J. Immunol.">
        <title>Mouse pellino-2 modulates IL-1 and lipopolysaccharide signaling.</title>
        <authorList>
            <person name="Yu K.-Y."/>
            <person name="Kwon H.-J."/>
            <person name="Norman D.A.M."/>
            <person name="Vig E."/>
            <person name="Goebl M.G."/>
            <person name="Harrington M.A."/>
        </authorList>
    </citation>
    <scope>INTERACTION WITH PELI2</scope>
</reference>
<reference key="8">
    <citation type="journal article" date="2005" name="J. Exp. Med.">
        <title>Interleukin-1 receptor-associated kinase-1 plays an essential role for Toll-like receptor (TLR)7- and TLR9-mediated interferon-{alpha} induction.</title>
        <authorList>
            <person name="Uematsu S."/>
            <person name="Sato S."/>
            <person name="Yamamoto M."/>
            <person name="Hirotani T."/>
            <person name="Kato H."/>
            <person name="Takeshita F."/>
            <person name="Matsuda M."/>
            <person name="Coban C."/>
            <person name="Ishii K.J."/>
            <person name="Kawai T."/>
            <person name="Takeuchi O."/>
            <person name="Akira S."/>
        </authorList>
    </citation>
    <scope>DISRUPTION PHENOTYPE</scope>
</reference>
<reference key="9">
    <citation type="journal article" date="2006" name="Nat. Immunol.">
        <title>Smad6 negatively regulates interleukin 1-receptor-Toll-like receptor signaling through direct interaction with the adapter Pellino-1.</title>
        <authorList>
            <person name="Choi K.C."/>
            <person name="Lee Y.S."/>
            <person name="Lim S."/>
            <person name="Choi H.K."/>
            <person name="Lee C.H."/>
            <person name="Lee E.K."/>
            <person name="Hong S."/>
            <person name="Kim I.H."/>
            <person name="Kim S.J."/>
            <person name="Park S.H."/>
        </authorList>
    </citation>
    <scope>IDENTIFICATION IN COMPLEX WITH IRAK4; MYD88; PELI1 AND TRAF6</scope>
</reference>
<reference key="10">
    <citation type="journal article" date="2011" name="Immunity">
        <title>Antiviral protein Viperin promotes Toll-like receptor 7- and Toll-like receptor 9-mediated type I interferon production in plasmacytoid dendritic cells.</title>
        <authorList>
            <person name="Saitoh T."/>
            <person name="Satoh T."/>
            <person name="Yamamoto N."/>
            <person name="Uematsu S."/>
            <person name="Takeuchi O."/>
            <person name="Kawai T."/>
            <person name="Akira S."/>
        </authorList>
    </citation>
    <scope>INTERACTION WITH RSAD2</scope>
    <scope>SUBCELLULAR LOCATION</scope>
</reference>
<reference key="11">
    <citation type="journal article" date="2011" name="Nat. Immunol.">
        <title>The IkappaB kinase complex regulates the stability of cytokine-encoding mRNA induced by TLR-IL-1R by controlling degradation of regnase-1.</title>
        <authorList>
            <person name="Iwasaki H."/>
            <person name="Takeuchi O."/>
            <person name="Teraguchi S."/>
            <person name="Matsushita K."/>
            <person name="Uehata T."/>
            <person name="Kuniyoshi K."/>
            <person name="Satoh T."/>
            <person name="Saitoh T."/>
            <person name="Matsushita M."/>
            <person name="Standley D.M."/>
            <person name="Akira S."/>
        </authorList>
    </citation>
    <scope>INTERACTION WITH ZC3H12A</scope>
</reference>
<sequence>MAGGPGPGEPVVPGAQHFLYEVPPWVMCRFYKVMDALEPADWCQFAALIVRDQTELRLCERSEQRTASVLWPWINRNARVADLVHILTHLQLLRARDIITAWHPPAPVVPPSTAAPRPSSISAGSEAGDWSPRKLQSSASTFLSPAFPGSQTHSESELLQVPLPVSLGPPLPSSAPSSTKSSPESPVSGLQRAHPSPFCWPFCEISQGTCNFSEELRIGEGGFGCVYRAVMRNTTYAVKRLKEEADLEWTMVKQSFLTEVEQLSRFRHPNIVDFAGYCAESGLYCLVYGFLPNGSLEDQLHLQTQACSPLSWPQRLDILLGTARAIQFLHQDSPSLIHGDIKSSNVLLDERLMPKLGDFGLARFSRFAGAKASQSSTVARTSTVRGTLAYLPEEYIKTGRLAVDTDTFSFGVVILETLAGQRAVRTQGAKTKYLKDLIEDEAEEAGVTLKSTQPTLWVGVATDAWAAPIAAQIYKKHLDSRPGPCPPQLGLALAQLACCCMHRRAKKRPPMTQVYKRLEGLQAGPPWELEVAGHGSPSPQENSYMSTTGSAQSGDEPWQPLVVTTRAPAQAAQQLQRSPNQPVESDESVPGLSATLHSWHLTPGSHPSPASFREASCTQGGTTRESSVRSSPGFQPTTMEGSPTGSSSLLSSEPPQIIINPARQKMVQKLALYEEGVLDSLQLLSSGFFPGLDLEPEKSQGPEESDEFQS</sequence>
<accession>Q62406</accession>
<accession>B1AUW4</accession>
<accession>Q6Y3Z5</accession>
<accession>Q6Y3Z6</accession>